<protein>
    <recommendedName>
        <fullName evidence="1">GTP cyclohydrolase FolE2</fullName>
        <ecNumber evidence="1">3.5.4.16</ecNumber>
    </recommendedName>
</protein>
<comment type="function">
    <text evidence="1">Converts GTP to 7,8-dihydroneopterin triphosphate.</text>
</comment>
<comment type="catalytic activity">
    <reaction evidence="1">
        <text>GTP + H2O = 7,8-dihydroneopterin 3'-triphosphate + formate + H(+)</text>
        <dbReference type="Rhea" id="RHEA:17473"/>
        <dbReference type="ChEBI" id="CHEBI:15377"/>
        <dbReference type="ChEBI" id="CHEBI:15378"/>
        <dbReference type="ChEBI" id="CHEBI:15740"/>
        <dbReference type="ChEBI" id="CHEBI:37565"/>
        <dbReference type="ChEBI" id="CHEBI:58462"/>
        <dbReference type="EC" id="3.5.4.16"/>
    </reaction>
</comment>
<comment type="pathway">
    <text evidence="1">Cofactor biosynthesis; 7,8-dihydroneopterin triphosphate biosynthesis; 7,8-dihydroneopterin triphosphate from GTP: step 1/1.</text>
</comment>
<comment type="similarity">
    <text evidence="1">Belongs to the GTP cyclohydrolase IV family.</text>
</comment>
<gene>
    <name evidence="1" type="primary">folE2</name>
    <name type="ordered locus">Pmen_4538</name>
</gene>
<accession>A4Y119</accession>
<dbReference type="EC" id="3.5.4.16" evidence="1"/>
<dbReference type="EMBL" id="CP000680">
    <property type="protein sequence ID" value="ABP87285.1"/>
    <property type="molecule type" value="Genomic_DNA"/>
</dbReference>
<dbReference type="SMR" id="A4Y119"/>
<dbReference type="STRING" id="399739.Pmen_4538"/>
<dbReference type="KEGG" id="pmy:Pmen_4538"/>
<dbReference type="PATRIC" id="fig|399739.8.peg.4602"/>
<dbReference type="eggNOG" id="COG1469">
    <property type="taxonomic scope" value="Bacteria"/>
</dbReference>
<dbReference type="HOGENOM" id="CLU_062816_0_0_6"/>
<dbReference type="OrthoDB" id="239637at2"/>
<dbReference type="UniPathway" id="UPA00848">
    <property type="reaction ID" value="UER00151"/>
</dbReference>
<dbReference type="GO" id="GO:0003934">
    <property type="term" value="F:GTP cyclohydrolase I activity"/>
    <property type="evidence" value="ECO:0007669"/>
    <property type="project" value="UniProtKB-UniRule"/>
</dbReference>
<dbReference type="GO" id="GO:0046654">
    <property type="term" value="P:tetrahydrofolate biosynthetic process"/>
    <property type="evidence" value="ECO:0007669"/>
    <property type="project" value="UniProtKB-UniRule"/>
</dbReference>
<dbReference type="Gene3D" id="3.10.270.10">
    <property type="entry name" value="Urate Oxidase"/>
    <property type="match status" value="1"/>
</dbReference>
<dbReference type="HAMAP" id="MF_01527_B">
    <property type="entry name" value="GTP_cyclohydrol_B"/>
    <property type="match status" value="1"/>
</dbReference>
<dbReference type="InterPro" id="IPR022838">
    <property type="entry name" value="GTP_cyclohydrolase_FolE2"/>
</dbReference>
<dbReference type="InterPro" id="IPR003801">
    <property type="entry name" value="GTP_cyclohydrolase_FolE2/MptA"/>
</dbReference>
<dbReference type="NCBIfam" id="NF010200">
    <property type="entry name" value="PRK13674.1-1"/>
    <property type="match status" value="1"/>
</dbReference>
<dbReference type="PANTHER" id="PTHR36445">
    <property type="entry name" value="GTP CYCLOHYDROLASE MPTA"/>
    <property type="match status" value="1"/>
</dbReference>
<dbReference type="PANTHER" id="PTHR36445:SF1">
    <property type="entry name" value="GTP CYCLOHYDROLASE MPTA"/>
    <property type="match status" value="1"/>
</dbReference>
<dbReference type="Pfam" id="PF02649">
    <property type="entry name" value="GCHY-1"/>
    <property type="match status" value="1"/>
</dbReference>
<sequence>MNEQLLPDIAAQATHHDLPLHWVGMAGIALPIQLAGQALNASVDIGVSLDDAGARGIHMSRLYLALQGLAGKPLTLAALQHLLDDCLSSHHELSDSASLTVRGALPLQRPALVSQLSGWKHYPFEIHARQDGRGLHMELQVELDYSSTCPCSAALARQLIQQRFAESFAQQPLNYLDVLDWLGSTQGIVATPHSQRSTATLQLRLAADCIDLPLLALLEAAERALGTPVQTAVKRADEQAFALANGQNLMFCEDAARRLHRALRQLPQASAFRVRVVHAESLHAHDAVAESRWNWS</sequence>
<evidence type="ECO:0000255" key="1">
    <source>
        <dbReference type="HAMAP-Rule" id="MF_01527"/>
    </source>
</evidence>
<proteinExistence type="inferred from homology"/>
<organism>
    <name type="scientific">Ectopseudomonas mendocina (strain ymp)</name>
    <name type="common">Pseudomonas mendocina</name>
    <dbReference type="NCBI Taxonomy" id="399739"/>
    <lineage>
        <taxon>Bacteria</taxon>
        <taxon>Pseudomonadati</taxon>
        <taxon>Pseudomonadota</taxon>
        <taxon>Gammaproteobacteria</taxon>
        <taxon>Pseudomonadales</taxon>
        <taxon>Pseudomonadaceae</taxon>
        <taxon>Ectopseudomonas</taxon>
    </lineage>
</organism>
<name>GCH4_ECTM1</name>
<keyword id="KW-0378">Hydrolase</keyword>
<feature type="chain" id="PRO_0000316532" description="GTP cyclohydrolase FolE2">
    <location>
        <begin position="1"/>
        <end position="296"/>
    </location>
</feature>
<feature type="site" description="May be catalytically important" evidence="1">
    <location>
        <position position="149"/>
    </location>
</feature>
<reference key="1">
    <citation type="submission" date="2007-04" db="EMBL/GenBank/DDBJ databases">
        <title>Complete sequence of Pseudomonas mendocina ymp.</title>
        <authorList>
            <consortium name="US DOE Joint Genome Institute"/>
            <person name="Copeland A."/>
            <person name="Lucas S."/>
            <person name="Lapidus A."/>
            <person name="Barry K."/>
            <person name="Glavina del Rio T."/>
            <person name="Dalin E."/>
            <person name="Tice H."/>
            <person name="Pitluck S."/>
            <person name="Kiss H."/>
            <person name="Brettin T."/>
            <person name="Detter J.C."/>
            <person name="Bruce D."/>
            <person name="Han C."/>
            <person name="Schmutz J."/>
            <person name="Larimer F."/>
            <person name="Land M."/>
            <person name="Hauser L."/>
            <person name="Kyrpides N."/>
            <person name="Mikhailova N."/>
            <person name="Hersman L."/>
            <person name="Dubois J."/>
            <person name="Maurice P."/>
            <person name="Richardson P."/>
        </authorList>
    </citation>
    <scope>NUCLEOTIDE SEQUENCE [LARGE SCALE GENOMIC DNA]</scope>
    <source>
        <strain>ymp</strain>
    </source>
</reference>